<feature type="chain" id="PRO_0000452491" description="Trans-enoyl reductase TwmE">
    <location>
        <begin position="1"/>
        <end position="368"/>
    </location>
</feature>
<feature type="binding site" evidence="1">
    <location>
        <begin position="49"/>
        <end position="52"/>
    </location>
    <ligand>
        <name>NADP(+)</name>
        <dbReference type="ChEBI" id="CHEBI:58349"/>
    </ligand>
</feature>
<feature type="binding site" evidence="2">
    <location>
        <begin position="135"/>
        <end position="142"/>
    </location>
    <ligand>
        <name>substrate</name>
    </ligand>
</feature>
<feature type="binding site" evidence="1">
    <location>
        <begin position="204"/>
        <end position="207"/>
    </location>
    <ligand>
        <name>NADP(+)</name>
        <dbReference type="ChEBI" id="CHEBI:58349"/>
    </ligand>
</feature>
<feature type="binding site" evidence="1">
    <location>
        <position position="222"/>
    </location>
    <ligand>
        <name>NADP(+)</name>
        <dbReference type="ChEBI" id="CHEBI:58349"/>
    </ligand>
</feature>
<feature type="binding site" evidence="1">
    <location>
        <begin position="269"/>
        <end position="270"/>
    </location>
    <ligand>
        <name>NADP(+)</name>
        <dbReference type="ChEBI" id="CHEBI:58349"/>
    </ligand>
</feature>
<feature type="binding site" evidence="2">
    <location>
        <begin position="290"/>
        <end position="294"/>
    </location>
    <ligand>
        <name>substrate</name>
    </ligand>
</feature>
<feature type="binding site" evidence="1">
    <location>
        <begin position="360"/>
        <end position="361"/>
    </location>
    <ligand>
        <name>NADP(+)</name>
        <dbReference type="ChEBI" id="CHEBI:58349"/>
    </ligand>
</feature>
<evidence type="ECO:0000250" key="1">
    <source>
        <dbReference type="UniProtKB" id="Q9Y7D0"/>
    </source>
</evidence>
<evidence type="ECO:0000255" key="2"/>
<evidence type="ECO:0000269" key="3">
    <source>
    </source>
</evidence>
<evidence type="ECO:0000303" key="4">
    <source>
    </source>
</evidence>
<evidence type="ECO:0000305" key="5"/>
<evidence type="ECO:0000305" key="6">
    <source>
    </source>
</evidence>
<comment type="function">
    <text evidence="3 6">Trans-enoyl reductase; part of the gene cluster that mediates the biosynthesis of wortmanamides A and B, reduced long-chain polyketides amidated with a specific omega-amino acid, 5-aminopentanoic acid (5PA) (PubMed:29343058). The PKS modules of TwmB are involved in the synthesis of the polyketide backbone, whereas the non-canonical C domain of TwmB is a bonafide condensation domain that specifically selects 5PA and catalyzes amidation to release polyketide chain (PubMed:29343058). The C domain clearly prefers C16 and C18 fatty acyl substrates, which is consistent with simultaneous formation of both octaketide and nonaketide acyl amides wortmanamides A and B (PubMed:29343058). Because TwmB lacks a designated enoylreductase (ER) domain, the required activity is provided the enoyl reductase TwmE (PubMed:29343058). The roles of the remaining enzymes have still to be clarified (Probable).</text>
</comment>
<comment type="pathway">
    <text evidence="3">Secondary metabolite biosynthesis.</text>
</comment>
<comment type="subunit">
    <text evidence="1">Monomer.</text>
</comment>
<comment type="similarity">
    <text evidence="5">Belongs to the zinc-containing alcohol dehydrogenase family.</text>
</comment>
<name>TWME_TALWO</name>
<keyword id="KW-0521">NADP</keyword>
<keyword id="KW-0547">Nucleotide-binding</keyword>
<keyword id="KW-0560">Oxidoreductase</keyword>
<dbReference type="EC" id="1.-.-.-" evidence="3"/>
<dbReference type="EMBL" id="MG837522">
    <property type="protein sequence ID" value="AUY61973.1"/>
    <property type="molecule type" value="Genomic_DNA"/>
</dbReference>
<dbReference type="EMBL" id="MH399766">
    <property type="protein sequence ID" value="QBC19713.1"/>
    <property type="molecule type" value="Genomic_DNA"/>
</dbReference>
<dbReference type="SMR" id="A0A2L0P0L5"/>
<dbReference type="GO" id="GO:0000166">
    <property type="term" value="F:nucleotide binding"/>
    <property type="evidence" value="ECO:0007669"/>
    <property type="project" value="UniProtKB-KW"/>
</dbReference>
<dbReference type="GO" id="GO:0016651">
    <property type="term" value="F:oxidoreductase activity, acting on NAD(P)H"/>
    <property type="evidence" value="ECO:0007669"/>
    <property type="project" value="InterPro"/>
</dbReference>
<dbReference type="CDD" id="cd08249">
    <property type="entry name" value="enoyl_reductase_like"/>
    <property type="match status" value="1"/>
</dbReference>
<dbReference type="Gene3D" id="3.90.180.10">
    <property type="entry name" value="Medium-chain alcohol dehydrogenases, catalytic domain"/>
    <property type="match status" value="1"/>
</dbReference>
<dbReference type="Gene3D" id="3.40.50.720">
    <property type="entry name" value="NAD(P)-binding Rossmann-like Domain"/>
    <property type="match status" value="1"/>
</dbReference>
<dbReference type="InterPro" id="IPR013149">
    <property type="entry name" value="ADH-like_C"/>
</dbReference>
<dbReference type="InterPro" id="IPR013154">
    <property type="entry name" value="ADH-like_N"/>
</dbReference>
<dbReference type="InterPro" id="IPR011032">
    <property type="entry name" value="GroES-like_sf"/>
</dbReference>
<dbReference type="InterPro" id="IPR036291">
    <property type="entry name" value="NAD(P)-bd_dom_sf"/>
</dbReference>
<dbReference type="InterPro" id="IPR020843">
    <property type="entry name" value="PKS_ER"/>
</dbReference>
<dbReference type="InterPro" id="IPR047122">
    <property type="entry name" value="Trans-enoyl_RdTase-like"/>
</dbReference>
<dbReference type="PANTHER" id="PTHR45348">
    <property type="entry name" value="HYPOTHETICAL OXIDOREDUCTASE (EUROFUNG)"/>
    <property type="match status" value="1"/>
</dbReference>
<dbReference type="PANTHER" id="PTHR45348:SF6">
    <property type="entry name" value="TRANS-ENOYL REDUCTASE APDC"/>
    <property type="match status" value="1"/>
</dbReference>
<dbReference type="Pfam" id="PF08240">
    <property type="entry name" value="ADH_N"/>
    <property type="match status" value="1"/>
</dbReference>
<dbReference type="Pfam" id="PF00107">
    <property type="entry name" value="ADH_zinc_N"/>
    <property type="match status" value="1"/>
</dbReference>
<dbReference type="SMART" id="SM00829">
    <property type="entry name" value="PKS_ER"/>
    <property type="match status" value="1"/>
</dbReference>
<dbReference type="SUPFAM" id="SSF50129">
    <property type="entry name" value="GroES-like"/>
    <property type="match status" value="1"/>
</dbReference>
<dbReference type="SUPFAM" id="SSF51735">
    <property type="entry name" value="NAD(P)-binding Rossmann-fold domains"/>
    <property type="match status" value="1"/>
</dbReference>
<accession>A0A2L0P0L5</accession>
<organism>
    <name type="scientific">Talaromyces wortmannii</name>
    <name type="common">Penicillium wortmannii</name>
    <dbReference type="NCBI Taxonomy" id="28567"/>
    <lineage>
        <taxon>Eukaryota</taxon>
        <taxon>Fungi</taxon>
        <taxon>Dikarya</taxon>
        <taxon>Ascomycota</taxon>
        <taxon>Pezizomycotina</taxon>
        <taxon>Eurotiomycetes</taxon>
        <taxon>Eurotiomycetidae</taxon>
        <taxon>Eurotiales</taxon>
        <taxon>Trichocomaceae</taxon>
        <taxon>Talaromyces</taxon>
        <taxon>Talaromyces sect. Islandici</taxon>
    </lineage>
</organism>
<protein>
    <recommendedName>
        <fullName evidence="4">Trans-enoyl reductase TwmE</fullName>
        <ecNumber evidence="3">1.-.-.-</ecNumber>
    </recommendedName>
    <alternativeName>
        <fullName evidence="4">Wortmanamides biosynthesis cluster protein E</fullName>
    </alternativeName>
</protein>
<sequence length="368" mass="39204">MTPTTLPTSQRAVQQDGNGKLHVANNAAIPSLLPGHVLVKTYAVALNPSDYKIQKNFPIPGAYVGIDFSGTVVQVANDVDSINPGTEVFGAAFTFSSAHRLANGAFAEYVRVRADLLFRIPSEQQCQNDGDLTLFKAATLGTAMSTCLLSLWSPDALGLVGKPEEPVLSEKPIPVLVYGGSTSVGTIAIQLLKLSGYDPIATCSPRSFDLVRSRGASNVFDYSSADVALKIKTHTGGRLKYALDCISDVASVATCYAAIQRPGGRYVSLEYIPDELLAQRRAVRPNFVLSAELYGEEIVLGEEAYDRPANREKHQLAVQNVGMLQRLIDSGGLKTHPTEEIEGGLEGVVKGLVALAGGGHPRKLVAVV</sequence>
<proteinExistence type="evidence at protein level"/>
<reference key="1">
    <citation type="journal article" date="2018" name="J. Am. Chem. Soc.">
        <title>Biosynthesis of long-chain N-acyl amide by a truncated polyketide synthase-nonribosomal peptide synthetase hybrid megasynthase in fungi.</title>
        <authorList>
            <person name="Hai Y."/>
            <person name="Tang Y."/>
        </authorList>
    </citation>
    <scope>NUCLEOTIDE SEQUENCE [GENOMIC DNA]</scope>
    <scope>FUNCTION</scope>
    <scope>CATALYTIC ACTIVITY</scope>
    <scope>PATHWAY</scope>
    <source>
        <strain>ATCC 26942 / CBS 387.67 / CCM F-175 / VKM F-2091</strain>
    </source>
</reference>
<gene>
    <name evidence="4" type="primary">TwmE</name>
    <name evidence="4" type="synonym">TwnE</name>
</gene>